<gene>
    <name type="primary">tef101</name>
    <name type="synonym">ef1a-a</name>
    <name type="synonym">tef1a</name>
    <name type="synonym">tef1e</name>
    <name type="ORF">SPCC794.09c</name>
</gene>
<keyword id="KW-0963">Cytoplasm</keyword>
<keyword id="KW-0903">Direct protein sequencing</keyword>
<keyword id="KW-0251">Elongation factor</keyword>
<keyword id="KW-0342">GTP-binding</keyword>
<keyword id="KW-0488">Methylation</keyword>
<keyword id="KW-0547">Nucleotide-binding</keyword>
<keyword id="KW-0648">Protein biosynthesis</keyword>
<keyword id="KW-1185">Reference proteome</keyword>
<dbReference type="EMBL" id="D82571">
    <property type="protein sequence ID" value="BAA11569.1"/>
    <property type="molecule type" value="mRNA"/>
</dbReference>
<dbReference type="EMBL" id="U42189">
    <property type="protein sequence ID" value="AAA85129.1"/>
    <property type="molecule type" value="mRNA"/>
</dbReference>
<dbReference type="EMBL" id="D89112">
    <property type="protein sequence ID" value="BAA19867.1"/>
    <property type="molecule type" value="mRNA"/>
</dbReference>
<dbReference type="EMBL" id="CU329672">
    <property type="protein sequence ID" value="CAA19136.1"/>
    <property type="molecule type" value="Genomic_DNA"/>
</dbReference>
<dbReference type="EMBL" id="U97367">
    <property type="protein sequence ID" value="AAB63859.1"/>
    <property type="molecule type" value="mRNA"/>
</dbReference>
<dbReference type="EMBL" id="U97373">
    <property type="protein sequence ID" value="AAB63865.1"/>
    <property type="molecule type" value="mRNA"/>
</dbReference>
<dbReference type="PIR" id="B41453">
    <property type="entry name" value="B41453"/>
</dbReference>
<dbReference type="PIR" id="T41617">
    <property type="entry name" value="T41617"/>
</dbReference>
<dbReference type="PIR" id="T42089">
    <property type="entry name" value="T42089"/>
</dbReference>
<dbReference type="PIR" id="T43267">
    <property type="entry name" value="T43267"/>
</dbReference>
<dbReference type="PIR" id="T43704">
    <property type="entry name" value="T43704"/>
</dbReference>
<dbReference type="RefSeq" id="NP_587757.1">
    <property type="nucleotide sequence ID" value="NM_001022750.2"/>
</dbReference>
<dbReference type="SMR" id="P0CT53"/>
<dbReference type="FunCoup" id="P0CT53">
    <property type="interactions" value="446"/>
</dbReference>
<dbReference type="IntAct" id="P0CT53">
    <property type="interactions" value="6"/>
</dbReference>
<dbReference type="MINT" id="P0CT53"/>
<dbReference type="STRING" id="284812.P0CT53"/>
<dbReference type="iPTMnet" id="P0CT53"/>
<dbReference type="PaxDb" id="4896-SPCC794.09c.1"/>
<dbReference type="EnsemblFungi" id="SPCC794.09c.1">
    <property type="protein sequence ID" value="SPCC794.09c.1:pep"/>
    <property type="gene ID" value="SPCC794.09c"/>
</dbReference>
<dbReference type="GeneID" id="2539035"/>
<dbReference type="KEGG" id="spo:2539035"/>
<dbReference type="PomBase" id="SPCC794.09c">
    <property type="gene designation" value="tef101"/>
</dbReference>
<dbReference type="VEuPathDB" id="FungiDB:SPCC794.09c"/>
<dbReference type="eggNOG" id="KOG0052">
    <property type="taxonomic scope" value="Eukaryota"/>
</dbReference>
<dbReference type="InParanoid" id="P0CT53"/>
<dbReference type="OMA" id="SPPCYTP"/>
<dbReference type="PhylomeDB" id="P0CT53"/>
<dbReference type="Reactome" id="R-SPO-156842">
    <property type="pathway name" value="Eukaryotic Translation Elongation"/>
</dbReference>
<dbReference type="Reactome" id="R-SPO-3371511">
    <property type="pathway name" value="HSF1 activation"/>
</dbReference>
<dbReference type="Reactome" id="R-SPO-6798695">
    <property type="pathway name" value="Neutrophil degranulation"/>
</dbReference>
<dbReference type="Reactome" id="R-SPO-8876725">
    <property type="pathway name" value="Protein methylation"/>
</dbReference>
<dbReference type="PRO" id="PR:P0CT53"/>
<dbReference type="Proteomes" id="UP000002485">
    <property type="component" value="Chromosome III"/>
</dbReference>
<dbReference type="GO" id="GO:0005829">
    <property type="term" value="C:cytosol"/>
    <property type="evidence" value="ECO:0007005"/>
    <property type="project" value="PomBase"/>
</dbReference>
<dbReference type="GO" id="GO:0005853">
    <property type="term" value="C:eukaryotic translation elongation factor 1 complex"/>
    <property type="evidence" value="ECO:0000266"/>
    <property type="project" value="PomBase"/>
</dbReference>
<dbReference type="GO" id="GO:0005516">
    <property type="term" value="F:calmodulin binding"/>
    <property type="evidence" value="ECO:0000314"/>
    <property type="project" value="PomBase"/>
</dbReference>
<dbReference type="GO" id="GO:0005525">
    <property type="term" value="F:GTP binding"/>
    <property type="evidence" value="ECO:0007669"/>
    <property type="project" value="UniProtKB-KW"/>
</dbReference>
<dbReference type="GO" id="GO:0003924">
    <property type="term" value="F:GTPase activity"/>
    <property type="evidence" value="ECO:0000318"/>
    <property type="project" value="GO_Central"/>
</dbReference>
<dbReference type="GO" id="GO:0003746">
    <property type="term" value="F:translation elongation factor activity"/>
    <property type="evidence" value="ECO:0000318"/>
    <property type="project" value="GO_Central"/>
</dbReference>
<dbReference type="GO" id="GO:0002182">
    <property type="term" value="P:cytoplasmic translational elongation"/>
    <property type="evidence" value="ECO:0000314"/>
    <property type="project" value="PomBase"/>
</dbReference>
<dbReference type="GO" id="GO:0006412">
    <property type="term" value="P:translation"/>
    <property type="evidence" value="ECO:0000318"/>
    <property type="project" value="GO_Central"/>
</dbReference>
<dbReference type="GO" id="GO:0006414">
    <property type="term" value="P:translational elongation"/>
    <property type="evidence" value="ECO:0000318"/>
    <property type="project" value="GO_Central"/>
</dbReference>
<dbReference type="CDD" id="cd01883">
    <property type="entry name" value="EF1_alpha"/>
    <property type="match status" value="1"/>
</dbReference>
<dbReference type="CDD" id="cd03693">
    <property type="entry name" value="EF1_alpha_II"/>
    <property type="match status" value="1"/>
</dbReference>
<dbReference type="CDD" id="cd03705">
    <property type="entry name" value="EF1_alpha_III"/>
    <property type="match status" value="1"/>
</dbReference>
<dbReference type="FunFam" id="2.40.30.10:FF:000003">
    <property type="entry name" value="Elongation factor 1-alpha"/>
    <property type="match status" value="1"/>
</dbReference>
<dbReference type="FunFam" id="2.40.30.10:FF:000005">
    <property type="entry name" value="Elongation factor 1-alpha"/>
    <property type="match status" value="1"/>
</dbReference>
<dbReference type="FunFam" id="3.40.50.300:FF:000211">
    <property type="entry name" value="Elongation factor 1-alpha"/>
    <property type="match status" value="1"/>
</dbReference>
<dbReference type="Gene3D" id="3.40.50.300">
    <property type="entry name" value="P-loop containing nucleotide triphosphate hydrolases"/>
    <property type="match status" value="1"/>
</dbReference>
<dbReference type="Gene3D" id="2.40.30.10">
    <property type="entry name" value="Translation factors"/>
    <property type="match status" value="2"/>
</dbReference>
<dbReference type="HAMAP" id="MF_00118_A">
    <property type="entry name" value="EF_Tu_A"/>
    <property type="match status" value="1"/>
</dbReference>
<dbReference type="InterPro" id="IPR004161">
    <property type="entry name" value="EFTu-like_2"/>
</dbReference>
<dbReference type="InterPro" id="IPR031157">
    <property type="entry name" value="G_TR_CS"/>
</dbReference>
<dbReference type="InterPro" id="IPR054696">
    <property type="entry name" value="GTP-eEF1A_C"/>
</dbReference>
<dbReference type="InterPro" id="IPR027417">
    <property type="entry name" value="P-loop_NTPase"/>
</dbReference>
<dbReference type="InterPro" id="IPR000795">
    <property type="entry name" value="T_Tr_GTP-bd_dom"/>
</dbReference>
<dbReference type="InterPro" id="IPR050100">
    <property type="entry name" value="TRAFAC_GTPase_members"/>
</dbReference>
<dbReference type="InterPro" id="IPR009000">
    <property type="entry name" value="Transl_B-barrel_sf"/>
</dbReference>
<dbReference type="InterPro" id="IPR009001">
    <property type="entry name" value="Transl_elong_EF1A/Init_IF2_C"/>
</dbReference>
<dbReference type="InterPro" id="IPR004539">
    <property type="entry name" value="Transl_elong_EF1A_euk/arc"/>
</dbReference>
<dbReference type="NCBIfam" id="TIGR00483">
    <property type="entry name" value="EF-1_alpha"/>
    <property type="match status" value="1"/>
</dbReference>
<dbReference type="NCBIfam" id="NF008969">
    <property type="entry name" value="PRK12317.1"/>
    <property type="match status" value="1"/>
</dbReference>
<dbReference type="PANTHER" id="PTHR23115">
    <property type="entry name" value="TRANSLATION FACTOR"/>
    <property type="match status" value="1"/>
</dbReference>
<dbReference type="Pfam" id="PF22594">
    <property type="entry name" value="GTP-eEF1A_C"/>
    <property type="match status" value="1"/>
</dbReference>
<dbReference type="Pfam" id="PF00009">
    <property type="entry name" value="GTP_EFTU"/>
    <property type="match status" value="1"/>
</dbReference>
<dbReference type="Pfam" id="PF03144">
    <property type="entry name" value="GTP_EFTU_D2"/>
    <property type="match status" value="1"/>
</dbReference>
<dbReference type="PRINTS" id="PR00315">
    <property type="entry name" value="ELONGATNFCT"/>
</dbReference>
<dbReference type="SUPFAM" id="SSF50465">
    <property type="entry name" value="EF-Tu/eEF-1alpha/eIF2-gamma C-terminal domain"/>
    <property type="match status" value="1"/>
</dbReference>
<dbReference type="SUPFAM" id="SSF52540">
    <property type="entry name" value="P-loop containing nucleoside triphosphate hydrolases"/>
    <property type="match status" value="1"/>
</dbReference>
<dbReference type="SUPFAM" id="SSF50447">
    <property type="entry name" value="Translation proteins"/>
    <property type="match status" value="1"/>
</dbReference>
<dbReference type="PROSITE" id="PS00301">
    <property type="entry name" value="G_TR_1"/>
    <property type="match status" value="1"/>
</dbReference>
<dbReference type="PROSITE" id="PS51722">
    <property type="entry name" value="G_TR_2"/>
    <property type="match status" value="1"/>
</dbReference>
<feature type="initiator methionine" description="Removed" evidence="2">
    <location>
        <position position="1"/>
    </location>
</feature>
<feature type="chain" id="PRO_0000090968" description="Elongation factor 1-alpha-A">
    <location>
        <begin position="2"/>
        <end position="460"/>
    </location>
</feature>
<feature type="domain" description="tr-type G">
    <location>
        <begin position="5"/>
        <end position="240"/>
    </location>
</feature>
<feature type="region of interest" description="G1" evidence="1">
    <location>
        <begin position="14"/>
        <end position="21"/>
    </location>
</feature>
<feature type="region of interest" description="G2" evidence="1">
    <location>
        <begin position="70"/>
        <end position="74"/>
    </location>
</feature>
<feature type="region of interest" description="G3" evidence="1">
    <location>
        <begin position="91"/>
        <end position="94"/>
    </location>
</feature>
<feature type="region of interest" description="G4" evidence="1">
    <location>
        <begin position="153"/>
        <end position="156"/>
    </location>
</feature>
<feature type="region of interest" description="G5" evidence="1">
    <location>
        <begin position="192"/>
        <end position="194"/>
    </location>
</feature>
<feature type="binding site" evidence="1">
    <location>
        <begin position="14"/>
        <end position="21"/>
    </location>
    <ligand>
        <name>GTP</name>
        <dbReference type="ChEBI" id="CHEBI:37565"/>
    </ligand>
</feature>
<feature type="binding site" evidence="1">
    <location>
        <begin position="91"/>
        <end position="95"/>
    </location>
    <ligand>
        <name>GTP</name>
        <dbReference type="ChEBI" id="CHEBI:37565"/>
    </ligand>
</feature>
<feature type="binding site" evidence="1">
    <location>
        <begin position="153"/>
        <end position="156"/>
    </location>
    <ligand>
        <name>GTP</name>
        <dbReference type="ChEBI" id="CHEBI:37565"/>
    </ligand>
</feature>
<feature type="modified residue" description="N,N,N-trimethylglycine" evidence="2">
    <location>
        <position position="2"/>
    </location>
</feature>
<feature type="modified residue" description="N6,N6-dimethyllysine; alternate" evidence="2">
    <location>
        <position position="3"/>
    </location>
</feature>
<feature type="modified residue" description="N6-methyllysine; alternate" evidence="2">
    <location>
        <position position="3"/>
    </location>
</feature>
<feature type="modified residue" description="N6-methyllysine" evidence="2">
    <location>
        <position position="30"/>
    </location>
</feature>
<feature type="modified residue" description="N6,N6,N6-trimethyllysine" evidence="2">
    <location>
        <position position="79"/>
    </location>
</feature>
<feature type="modified residue" description="N6,N6-dimethyllysine; alternate" evidence="2">
    <location>
        <position position="316"/>
    </location>
</feature>
<feature type="modified residue" description="N6-methyllysine; alternate" evidence="2">
    <location>
        <position position="316"/>
    </location>
</feature>
<feature type="modified residue" description="N6-methyllysine" evidence="2">
    <location>
        <position position="390"/>
    </location>
</feature>
<feature type="sequence conflict" description="In Ref. 5; AAB63859/AAB63865." evidence="1" ref="5">
    <original>T</original>
    <variation>F</variation>
    <location>
        <position position="47"/>
    </location>
</feature>
<feature type="sequence conflict" description="In Ref. 5; AAB63859/AAB63865." evidence="1" ref="5">
    <original>A</original>
    <variation>S</variation>
    <location>
        <position position="57"/>
    </location>
</feature>
<feature type="sequence conflict" description="In Ref. 3; BAA19867." evidence="1" ref="3">
    <original>V</original>
    <variation>I</variation>
    <location>
        <position position="113"/>
    </location>
</feature>
<feature type="sequence conflict" description="In Ref. 1; BAA11569." evidence="1" ref="1">
    <original>L</original>
    <variation>R</variation>
    <location>
        <position position="139"/>
    </location>
</feature>
<feature type="sequence conflict" description="In Ref. 3; BAA19867." evidence="1" ref="3">
    <original>L</original>
    <variation>V</variation>
    <location>
        <position position="139"/>
    </location>
</feature>
<feature type="sequence conflict" description="In Ref. 2; AAA85129." evidence="1" ref="2">
    <original>A</original>
    <variation>G</variation>
    <location>
        <position position="140"/>
    </location>
</feature>
<feature type="sequence conflict" description="In Ref. 2; AAA85129." evidence="1" ref="2">
    <original>F</original>
    <variation>FG</variation>
    <location>
        <position position="422"/>
    </location>
</feature>
<sequence length="460" mass="49660">MGKEKGHINVVVIGHVDSGKSTTTGHLIYKCGGIDKRTIEKFEKEATELGKGSFKYAWVLDKLKAERERGITIDIALWKFETPKYNVTVIDAPGHRDFIKNMITGTSQADCAVLIIGGGTGEFEAGISKDGQTREHALLAYTLGVKQLIVAVNKMDTTGWSQARFEEIVKETSNFIKKVGFNPKTVPFVPVSGFQGDNMIEPTTNMPWYQGWQKETKAGVVKGKTLLEAIDSIEPPARPTDKPLRLPLQDVYKIGGIGTVPVGRVETGVIKPGMIVTFAPAGVTTEVKSVEMHHESLDAGLPGDNVGFNVKNVSVKDIRRGNVCGDSKNDPPMGCASFTAQVIILNHPGQISAGYSPVLDCHTAHIACKFAELIEKIDRRSGKKIEESPKFVKSGDACIAKMVPSKPMCVEAFTDYAPLGRFAVRDMRQTVAVGVIKAVEKVAPGAAKVTKAAVKAGAKK</sequence>
<protein>
    <recommendedName>
        <fullName>Elongation factor 1-alpha-A</fullName>
        <shortName>EF-1-alpha-A</shortName>
    </recommendedName>
</protein>
<proteinExistence type="evidence at protein level"/>
<reference key="1">
    <citation type="journal article" date="1997" name="Gene">
        <title>Comprehensive cloning of Schizosaccharomyces pombe genes encoding translation elongation factors.</title>
        <authorList>
            <person name="Mita K."/>
            <person name="Morimyo M."/>
            <person name="Ito K."/>
            <person name="Sugaya K."/>
            <person name="Ebihara K."/>
            <person name="Hongo E."/>
            <person name="Higashi T."/>
            <person name="Hirayama Y."/>
            <person name="Nakamura Y."/>
        </authorList>
    </citation>
    <scope>NUCLEOTIDE SEQUENCE [MRNA]</scope>
    <source>
        <strain>972 / ATCC 24843</strain>
    </source>
</reference>
<reference key="2">
    <citation type="journal article" date="1999" name="Biochem. Cell Biol.">
        <title>Cloning of a Schizosaccharomyces pombe homologue of elongation factor 1 alpha by two-hybrid selection of calmodulin-binding proteins.</title>
        <authorList>
            <person name="Rasmussen C."/>
            <person name="Wiebe C."/>
        </authorList>
    </citation>
    <scope>NUCLEOTIDE SEQUENCE [MRNA]</scope>
</reference>
<reference key="3">
    <citation type="journal article" date="1997" name="DNA Res.">
        <title>Identification of open reading frames in Schizosaccharomyces pombe cDNAs.</title>
        <authorList>
            <person name="Yoshioka S."/>
            <person name="Kato K."/>
            <person name="Nakai K."/>
            <person name="Okayama H."/>
            <person name="Nojima H."/>
        </authorList>
    </citation>
    <scope>NUCLEOTIDE SEQUENCE [LARGE SCALE MRNA]</scope>
    <source>
        <strain>PR745</strain>
    </source>
</reference>
<reference key="4">
    <citation type="journal article" date="2002" name="Nature">
        <title>The genome sequence of Schizosaccharomyces pombe.</title>
        <authorList>
            <person name="Wood V."/>
            <person name="Gwilliam R."/>
            <person name="Rajandream M.A."/>
            <person name="Lyne M.H."/>
            <person name="Lyne R."/>
            <person name="Stewart A."/>
            <person name="Sgouros J.G."/>
            <person name="Peat N."/>
            <person name="Hayles J."/>
            <person name="Baker S.G."/>
            <person name="Basham D."/>
            <person name="Bowman S."/>
            <person name="Brooks K."/>
            <person name="Brown D."/>
            <person name="Brown S."/>
            <person name="Chillingworth T."/>
            <person name="Churcher C.M."/>
            <person name="Collins M."/>
            <person name="Connor R."/>
            <person name="Cronin A."/>
            <person name="Davis P."/>
            <person name="Feltwell T."/>
            <person name="Fraser A."/>
            <person name="Gentles S."/>
            <person name="Goble A."/>
            <person name="Hamlin N."/>
            <person name="Harris D.E."/>
            <person name="Hidalgo J."/>
            <person name="Hodgson G."/>
            <person name="Holroyd S."/>
            <person name="Hornsby T."/>
            <person name="Howarth S."/>
            <person name="Huckle E.J."/>
            <person name="Hunt S."/>
            <person name="Jagels K."/>
            <person name="James K.D."/>
            <person name="Jones L."/>
            <person name="Jones M."/>
            <person name="Leather S."/>
            <person name="McDonald S."/>
            <person name="McLean J."/>
            <person name="Mooney P."/>
            <person name="Moule S."/>
            <person name="Mungall K.L."/>
            <person name="Murphy L.D."/>
            <person name="Niblett D."/>
            <person name="Odell C."/>
            <person name="Oliver K."/>
            <person name="O'Neil S."/>
            <person name="Pearson D."/>
            <person name="Quail M.A."/>
            <person name="Rabbinowitsch E."/>
            <person name="Rutherford K.M."/>
            <person name="Rutter S."/>
            <person name="Saunders D."/>
            <person name="Seeger K."/>
            <person name="Sharp S."/>
            <person name="Skelton J."/>
            <person name="Simmonds M.N."/>
            <person name="Squares R."/>
            <person name="Squares S."/>
            <person name="Stevens K."/>
            <person name="Taylor K."/>
            <person name="Taylor R.G."/>
            <person name="Tivey A."/>
            <person name="Walsh S.V."/>
            <person name="Warren T."/>
            <person name="Whitehead S."/>
            <person name="Woodward J.R."/>
            <person name="Volckaert G."/>
            <person name="Aert R."/>
            <person name="Robben J."/>
            <person name="Grymonprez B."/>
            <person name="Weltjens I."/>
            <person name="Vanstreels E."/>
            <person name="Rieger M."/>
            <person name="Schaefer M."/>
            <person name="Mueller-Auer S."/>
            <person name="Gabel C."/>
            <person name="Fuchs M."/>
            <person name="Duesterhoeft A."/>
            <person name="Fritzc C."/>
            <person name="Holzer E."/>
            <person name="Moestl D."/>
            <person name="Hilbert H."/>
            <person name="Borzym K."/>
            <person name="Langer I."/>
            <person name="Beck A."/>
            <person name="Lehrach H."/>
            <person name="Reinhardt R."/>
            <person name="Pohl T.M."/>
            <person name="Eger P."/>
            <person name="Zimmermann W."/>
            <person name="Wedler H."/>
            <person name="Wambutt R."/>
            <person name="Purnelle B."/>
            <person name="Goffeau A."/>
            <person name="Cadieu E."/>
            <person name="Dreano S."/>
            <person name="Gloux S."/>
            <person name="Lelaure V."/>
            <person name="Mottier S."/>
            <person name="Galibert F."/>
            <person name="Aves S.J."/>
            <person name="Xiang Z."/>
            <person name="Hunt C."/>
            <person name="Moore K."/>
            <person name="Hurst S.M."/>
            <person name="Lucas M."/>
            <person name="Rochet M."/>
            <person name="Gaillardin C."/>
            <person name="Tallada V.A."/>
            <person name="Garzon A."/>
            <person name="Thode G."/>
            <person name="Daga R.R."/>
            <person name="Cruzado L."/>
            <person name="Jimenez J."/>
            <person name="Sanchez M."/>
            <person name="del Rey F."/>
            <person name="Benito J."/>
            <person name="Dominguez A."/>
            <person name="Revuelta J.L."/>
            <person name="Moreno S."/>
            <person name="Armstrong J."/>
            <person name="Forsburg S.L."/>
            <person name="Cerutti L."/>
            <person name="Lowe T."/>
            <person name="McCombie W.R."/>
            <person name="Paulsen I."/>
            <person name="Potashkin J."/>
            <person name="Shpakovski G.V."/>
            <person name="Ussery D."/>
            <person name="Barrell B.G."/>
            <person name="Nurse P."/>
        </authorList>
    </citation>
    <scope>NUCLEOTIDE SEQUENCE [LARGE SCALE GENOMIC DNA]</scope>
    <source>
        <strain>972 / ATCC 24843</strain>
    </source>
</reference>
<reference key="5">
    <citation type="submission" date="1997-04" db="EMBL/GenBank/DDBJ databases">
        <authorList>
            <person name="Jang Y.-J."/>
            <person name="Yoo H.-S."/>
        </authorList>
    </citation>
    <scope>NUCLEOTIDE SEQUENCE [MRNA] OF 1-64</scope>
    <source>
        <strain>972 / ATCC 24843</strain>
    </source>
</reference>
<reference key="6">
    <citation type="journal article" date="1988" name="J. Biochem.">
        <title>Peptide elongation factor 1 from yeasts: purification and biochemical characterization of peptide elongation factors 1alpha and 1beta(gamma) from Saccharomyces carlsbergensis and Schizosaccharomyces pombe.</title>
        <authorList>
            <person name="Miyazaki M."/>
            <person name="Uritani M."/>
            <person name="Fujimura K."/>
            <person name="Yamakatsu H."/>
            <person name="Kageyama T."/>
            <person name="Takahashi K."/>
        </authorList>
    </citation>
    <scope>PROTEIN SEQUENCE OF 64-94</scope>
</reference>
<organism>
    <name type="scientific">Schizosaccharomyces pombe (strain 972 / ATCC 24843)</name>
    <name type="common">Fission yeast</name>
    <dbReference type="NCBI Taxonomy" id="284812"/>
    <lineage>
        <taxon>Eukaryota</taxon>
        <taxon>Fungi</taxon>
        <taxon>Dikarya</taxon>
        <taxon>Ascomycota</taxon>
        <taxon>Taphrinomycotina</taxon>
        <taxon>Schizosaccharomycetes</taxon>
        <taxon>Schizosaccharomycetales</taxon>
        <taxon>Schizosaccharomycetaceae</taxon>
        <taxon>Schizosaccharomyces</taxon>
    </lineage>
</organism>
<name>EF1A1_SCHPO</name>
<accession>P0CT53</accession>
<accession>O14372</accession>
<accession>O14441</accession>
<accession>O59818</accession>
<accession>P50522</accession>
<accession>P78764</accession>
<accession>Q10117</accession>
<accession>Q10119</accession>
<accession>Q10158</accession>
<accession>Q7M4U9</accession>
<accession>Q7Z8V5</accession>
<comment type="function">
    <text>This protein promotes the GTP-dependent binding of aminoacyl-tRNA to the A-site of ribosomes during protein biosynthesis.</text>
</comment>
<comment type="subcellular location">
    <subcellularLocation>
        <location>Cytoplasm</location>
    </subcellularLocation>
</comment>
<comment type="similarity">
    <text evidence="3">Belongs to the TRAFAC class translation factor GTPase superfamily. Classic translation factor GTPase family. EF-Tu/EF-1A subfamily.</text>
</comment>
<evidence type="ECO:0000250" key="1"/>
<evidence type="ECO:0000250" key="2">
    <source>
        <dbReference type="UniProtKB" id="P02994"/>
    </source>
</evidence>
<evidence type="ECO:0000305" key="3"/>